<dbReference type="EMBL" id="CU207366">
    <property type="protein sequence ID" value="CAL65367.1"/>
    <property type="molecule type" value="Genomic_DNA"/>
</dbReference>
<dbReference type="RefSeq" id="WP_011708305.1">
    <property type="nucleotide sequence ID" value="NC_008571.1"/>
</dbReference>
<dbReference type="SMR" id="A0LYC2"/>
<dbReference type="STRING" id="411154.GFO_0382"/>
<dbReference type="KEGG" id="gfo:GFO_0382"/>
<dbReference type="eggNOG" id="COG0184">
    <property type="taxonomic scope" value="Bacteria"/>
</dbReference>
<dbReference type="HOGENOM" id="CLU_148518_0_1_10"/>
<dbReference type="OrthoDB" id="9799262at2"/>
<dbReference type="Proteomes" id="UP000000755">
    <property type="component" value="Chromosome"/>
</dbReference>
<dbReference type="GO" id="GO:0022627">
    <property type="term" value="C:cytosolic small ribosomal subunit"/>
    <property type="evidence" value="ECO:0007669"/>
    <property type="project" value="TreeGrafter"/>
</dbReference>
<dbReference type="GO" id="GO:0019843">
    <property type="term" value="F:rRNA binding"/>
    <property type="evidence" value="ECO:0007669"/>
    <property type="project" value="UniProtKB-UniRule"/>
</dbReference>
<dbReference type="GO" id="GO:0003735">
    <property type="term" value="F:structural constituent of ribosome"/>
    <property type="evidence" value="ECO:0007669"/>
    <property type="project" value="InterPro"/>
</dbReference>
<dbReference type="GO" id="GO:0006412">
    <property type="term" value="P:translation"/>
    <property type="evidence" value="ECO:0007669"/>
    <property type="project" value="UniProtKB-UniRule"/>
</dbReference>
<dbReference type="CDD" id="cd00353">
    <property type="entry name" value="Ribosomal_S15p_S13e"/>
    <property type="match status" value="1"/>
</dbReference>
<dbReference type="FunFam" id="1.10.287.10:FF:000002">
    <property type="entry name" value="30S ribosomal protein S15"/>
    <property type="match status" value="1"/>
</dbReference>
<dbReference type="Gene3D" id="6.10.250.3130">
    <property type="match status" value="1"/>
</dbReference>
<dbReference type="Gene3D" id="1.10.287.10">
    <property type="entry name" value="S15/NS1, RNA-binding"/>
    <property type="match status" value="1"/>
</dbReference>
<dbReference type="HAMAP" id="MF_01343_B">
    <property type="entry name" value="Ribosomal_uS15_B"/>
    <property type="match status" value="1"/>
</dbReference>
<dbReference type="InterPro" id="IPR000589">
    <property type="entry name" value="Ribosomal_uS15"/>
</dbReference>
<dbReference type="InterPro" id="IPR005290">
    <property type="entry name" value="Ribosomal_uS15_bac-type"/>
</dbReference>
<dbReference type="InterPro" id="IPR009068">
    <property type="entry name" value="uS15_NS1_RNA-bd_sf"/>
</dbReference>
<dbReference type="NCBIfam" id="TIGR00952">
    <property type="entry name" value="S15_bact"/>
    <property type="match status" value="1"/>
</dbReference>
<dbReference type="PANTHER" id="PTHR23321">
    <property type="entry name" value="RIBOSOMAL PROTEIN S15, BACTERIAL AND ORGANELLAR"/>
    <property type="match status" value="1"/>
</dbReference>
<dbReference type="PANTHER" id="PTHR23321:SF26">
    <property type="entry name" value="SMALL RIBOSOMAL SUBUNIT PROTEIN US15M"/>
    <property type="match status" value="1"/>
</dbReference>
<dbReference type="Pfam" id="PF00312">
    <property type="entry name" value="Ribosomal_S15"/>
    <property type="match status" value="1"/>
</dbReference>
<dbReference type="SMART" id="SM01387">
    <property type="entry name" value="Ribosomal_S15"/>
    <property type="match status" value="1"/>
</dbReference>
<dbReference type="SUPFAM" id="SSF47060">
    <property type="entry name" value="S15/NS1 RNA-binding domain"/>
    <property type="match status" value="1"/>
</dbReference>
<dbReference type="PROSITE" id="PS00362">
    <property type="entry name" value="RIBOSOMAL_S15"/>
    <property type="match status" value="1"/>
</dbReference>
<keyword id="KW-0687">Ribonucleoprotein</keyword>
<keyword id="KW-0689">Ribosomal protein</keyword>
<keyword id="KW-0694">RNA-binding</keyword>
<keyword id="KW-0699">rRNA-binding</keyword>
<sequence>MYLTSEKKEEIFSKHGKGKNDTGSAEGQIALFTHRIAHLSEHLKTNRKDYNTERSLVMLVGKRRSLLDYLMKKDIIRYRAIVKELGLRK</sequence>
<accession>A0LYC2</accession>
<reference key="1">
    <citation type="journal article" date="2006" name="Environ. Microbiol.">
        <title>Whole genome analysis of the marine Bacteroidetes'Gramella forsetii' reveals adaptations to degradation of polymeric organic matter.</title>
        <authorList>
            <person name="Bauer M."/>
            <person name="Kube M."/>
            <person name="Teeling H."/>
            <person name="Richter M."/>
            <person name="Lombardot T."/>
            <person name="Allers E."/>
            <person name="Wuerdemann C.A."/>
            <person name="Quast C."/>
            <person name="Kuhl H."/>
            <person name="Knaust F."/>
            <person name="Woebken D."/>
            <person name="Bischof K."/>
            <person name="Mussmann M."/>
            <person name="Choudhuri J.V."/>
            <person name="Meyer F."/>
            <person name="Reinhardt R."/>
            <person name="Amann R.I."/>
            <person name="Gloeckner F.O."/>
        </authorList>
    </citation>
    <scope>NUCLEOTIDE SEQUENCE [LARGE SCALE GENOMIC DNA]</scope>
    <source>
        <strain>DSM 17595 / CGMCC 1.15422 / KT0803</strain>
    </source>
</reference>
<proteinExistence type="inferred from homology"/>
<organism>
    <name type="scientific">Christiangramia forsetii (strain DSM 17595 / CGMCC 1.15422 / KT0803)</name>
    <name type="common">Gramella forsetii</name>
    <dbReference type="NCBI Taxonomy" id="411154"/>
    <lineage>
        <taxon>Bacteria</taxon>
        <taxon>Pseudomonadati</taxon>
        <taxon>Bacteroidota</taxon>
        <taxon>Flavobacteriia</taxon>
        <taxon>Flavobacteriales</taxon>
        <taxon>Flavobacteriaceae</taxon>
        <taxon>Christiangramia</taxon>
    </lineage>
</organism>
<protein>
    <recommendedName>
        <fullName evidence="1">Small ribosomal subunit protein uS15</fullName>
    </recommendedName>
    <alternativeName>
        <fullName evidence="3">30S ribosomal protein S15</fullName>
    </alternativeName>
</protein>
<name>RS15_CHRFK</name>
<evidence type="ECO:0000255" key="1">
    <source>
        <dbReference type="HAMAP-Rule" id="MF_01343"/>
    </source>
</evidence>
<evidence type="ECO:0000256" key="2">
    <source>
        <dbReference type="SAM" id="MobiDB-lite"/>
    </source>
</evidence>
<evidence type="ECO:0000305" key="3"/>
<feature type="chain" id="PRO_1000054790" description="Small ribosomal subunit protein uS15">
    <location>
        <begin position="1"/>
        <end position="89"/>
    </location>
</feature>
<feature type="region of interest" description="Disordered" evidence="2">
    <location>
        <begin position="1"/>
        <end position="24"/>
    </location>
</feature>
<feature type="compositionally biased region" description="Basic and acidic residues" evidence="2">
    <location>
        <begin position="1"/>
        <end position="13"/>
    </location>
</feature>
<comment type="function">
    <text evidence="1">One of the primary rRNA binding proteins, it binds directly to 16S rRNA where it helps nucleate assembly of the platform of the 30S subunit by binding and bridging several RNA helices of the 16S rRNA.</text>
</comment>
<comment type="function">
    <text evidence="1">Forms an intersubunit bridge (bridge B4) with the 23S rRNA of the 50S subunit in the ribosome.</text>
</comment>
<comment type="subunit">
    <text evidence="1">Part of the 30S ribosomal subunit. Forms a bridge to the 50S subunit in the 70S ribosome, contacting the 23S rRNA.</text>
</comment>
<comment type="similarity">
    <text evidence="1">Belongs to the universal ribosomal protein uS15 family.</text>
</comment>
<gene>
    <name evidence="1" type="primary">rpsO</name>
    <name type="ordered locus">GFO_0382</name>
</gene>